<sequence length="786" mass="87421">MATTKQKVTAPSSSTAPCCPSTSILRREATAAVAGVGDGLQNWNNVPSVDDKQKKTASSALASLASTEPLSSNTSTKGIQIMTRAQTCHPLDPLSAAEISVAVATVRAAGETPEVRDGMRFIEVVLLEPDKSVVALADAYFFPPFQSSLMPRTKGGSLIPTKLPPRRARLIVYNKKTNETSIWIVELNEVHAAARGGHHRGKVISSNVVPDVQPPIDAQEYAECEAVVKSYPPFRDAMRRRGIDDLDLVMVDPWCVGYHSEADAPSRRLAKPLVFCRTESDCPMENGYARPVEGIYVLVDVQNMQIIEFEDRKLVPLPPADPLRNYTAGETRGGVDRSDVKPLHIIQPEGPSFRISGNYIEWQKWNFRIGFTPREGLVIHSVAYLDGSRGRRPIAHRLSFVEMVVPYGDPNDPHYRKNAFDAGEDGLGKNAHSLKRGCDCLGYIKYFDAHFTNFTGGVETTENCVCLHEEDHGMLWKHQDWRTGLAEVRRSRRLTVSFVCTVANYEYAFYWHFYQDGKIEAEVKLTGILSLGALQPGEYRKYGTTILPGLYAPVHQHFFVARMNMAVDCKPGEAHNQVVEVNVKVEEPGKENVHNNAFYAEETLLRSELQAMRDCDPFSARHWIVRNTRTVNRTGQLTGYKLVPGPNCLPLAGPEAKFLRRAAFLKHNLWVTQYAPGEEFPGGEFPNQNPRVGEGLASWVKQDRPLEESDIVLWYIFGITHVPRLEDWPVMPVEHIGFVLQPHGFFNCSPAVDVPPPSACDSESRDSDVTETSVAKSTATSLLAKL</sequence>
<name>DAO1_TOBAC</name>
<accession>A0A1S3XSG2</accession>
<protein>
    <recommendedName>
        <fullName evidence="10">Diamine oxidase [copper-containing] 1, peroxisomal</fullName>
        <shortName evidence="10">NtDAO1</shortName>
        <ecNumber evidence="8">1.4.3.-</ecNumber>
    </recommendedName>
    <alternativeName>
        <fullName>Copper methylamine oxidase</fullName>
        <ecNumber evidence="3">1.4.3.21</ecNumber>
    </alternativeName>
    <alternativeName>
        <fullName evidence="9">N-methylputrescine oxidase 2, peroxisomal</fullName>
        <shortName evidence="9">NtMPO2</shortName>
        <ecNumber evidence="1">1.4.3.-</ecNumber>
    </alternativeName>
</protein>
<feature type="chain" id="PRO_0000455787" description="Diamine oxidase [copper-containing] 1, peroxisomal">
    <location>
        <begin position="1"/>
        <end position="786"/>
    </location>
</feature>
<feature type="active site" description="Proton acceptor" evidence="2">
    <location>
        <position position="421"/>
    </location>
</feature>
<feature type="active site" description="Schiff-base intermediate with substrate; via topaquinone" evidence="2">
    <location>
        <position position="505"/>
    </location>
</feature>
<feature type="binding site" evidence="2">
    <location>
        <begin position="419"/>
        <end position="430"/>
    </location>
    <ligand>
        <name>substrate</name>
    </ligand>
</feature>
<feature type="binding site" evidence="3">
    <location>
        <begin position="502"/>
        <end position="507"/>
    </location>
    <ligand>
        <name>substrate</name>
    </ligand>
</feature>
<feature type="binding site" evidence="2">
    <location>
        <position position="555"/>
    </location>
    <ligand>
        <name>Cu cation</name>
        <dbReference type="ChEBI" id="CHEBI:23378"/>
    </ligand>
</feature>
<feature type="binding site" evidence="2">
    <location>
        <position position="557"/>
    </location>
    <ligand>
        <name>Cu cation</name>
        <dbReference type="ChEBI" id="CHEBI:23378"/>
    </ligand>
</feature>
<feature type="binding site" evidence="4">
    <location>
        <position position="710"/>
    </location>
    <ligand>
        <name>Mn(2+)</name>
        <dbReference type="ChEBI" id="CHEBI:29035"/>
    </ligand>
</feature>
<feature type="binding site" evidence="4">
    <location>
        <position position="711"/>
    </location>
    <ligand>
        <name>Mn(2+)</name>
        <dbReference type="ChEBI" id="CHEBI:29035"/>
    </ligand>
</feature>
<feature type="binding site" evidence="2">
    <location>
        <position position="721"/>
    </location>
    <ligand>
        <name>Cu cation</name>
        <dbReference type="ChEBI" id="CHEBI:23378"/>
    </ligand>
</feature>
<feature type="site" description="Microbody targeting signal" evidence="5">
    <location>
        <begin position="784"/>
        <end position="786"/>
    </location>
</feature>
<feature type="modified residue" description="2',4',5'-topaquinone" evidence="2">
    <location>
        <position position="505"/>
    </location>
</feature>
<feature type="disulfide bond" evidence="2">
    <location>
        <begin position="440"/>
        <end position="466"/>
    </location>
</feature>
<gene>
    <name evidence="10" type="primary">DAO1</name>
    <name evidence="9" type="synonym">MPO2</name>
    <name evidence="12" type="ORF">LOC107768026</name>
</gene>
<comment type="function">
    <text evidence="6 8">Involved in putrescine catabolism in peroxisomes (PubMed:24287136). May also be involved in the biosynthesis of pyridine alkaloid natural products, leading mainly to the production of anabasine, anatabine, nicotine and nornicotine, effective deterrents against herbivores with antiparasitic and pesticide properties (neurotoxins); nornicotine serves as the precursor in the synthesis of the carcinogen compound N'-nitrosonornicotine (NNN) (PubMed:16656744). Oxidizes preferentially non-N-methylated amines (PubMed:24287136).</text>
</comment>
<comment type="catalytic activity">
    <reaction evidence="8">
        <text>a primary methyl amine + O2 + H2O = an aldehyde + H2O2 + NH4(+)</text>
        <dbReference type="Rhea" id="RHEA:16153"/>
        <dbReference type="ChEBI" id="CHEBI:15377"/>
        <dbReference type="ChEBI" id="CHEBI:15379"/>
        <dbReference type="ChEBI" id="CHEBI:16240"/>
        <dbReference type="ChEBI" id="CHEBI:17478"/>
        <dbReference type="ChEBI" id="CHEBI:28938"/>
        <dbReference type="ChEBI" id="CHEBI:228804"/>
        <dbReference type="EC" id="1.4.3.21"/>
    </reaction>
    <physiologicalReaction direction="left-to-right" evidence="8">
        <dbReference type="Rhea" id="RHEA:16154"/>
    </physiologicalReaction>
</comment>
<comment type="catalytic activity">
    <reaction evidence="1">
        <text>N-methylputrescine + O2 + H2O = 4-methylaminobutanal + H2O2 + NH4(+)</text>
        <dbReference type="Rhea" id="RHEA:71015"/>
        <dbReference type="ChEBI" id="CHEBI:15377"/>
        <dbReference type="ChEBI" id="CHEBI:15379"/>
        <dbReference type="ChEBI" id="CHEBI:16240"/>
        <dbReference type="ChEBI" id="CHEBI:28938"/>
        <dbReference type="ChEBI" id="CHEBI:58039"/>
        <dbReference type="ChEBI" id="CHEBI:190141"/>
    </reaction>
    <physiologicalReaction direction="left-to-right" evidence="1">
        <dbReference type="Rhea" id="RHEA:71016"/>
    </physiologicalReaction>
</comment>
<comment type="cofactor">
    <cofactor evidence="3">
        <name>Cu cation</name>
        <dbReference type="ChEBI" id="CHEBI:23378"/>
    </cofactor>
    <cofactor evidence="2">
        <name>Zn(2+)</name>
        <dbReference type="ChEBI" id="CHEBI:29105"/>
    </cofactor>
    <text evidence="2 3">Binds 1 copper ion per subunit (By similarity). Can also use zinc ion as cofactor (By similarity).</text>
</comment>
<comment type="cofactor">
    <cofactor evidence="3">
        <name>L-topaquinone</name>
        <dbReference type="ChEBI" id="CHEBI:79027"/>
    </cofactor>
    <text evidence="3">Contains 1 topaquinone per subunit.</text>
</comment>
<comment type="biophysicochemical properties">
    <kinetics>
        <KM evidence="8">163 uM for putrescine</KM>
        <KM evidence="8">478 uM for N-methylputrescine</KM>
        <KM evidence="8">492 uM for cadaverine</KM>
        <Vmax evidence="8">561.0 pmol/sec/mg enzyme with putrescine as substrate</Vmax>
        <Vmax evidence="8">928.0 pmol/sec/mg enzyme with N-methylputrescine as substrate</Vmax>
        <Vmax evidence="8">840.0 pmol/sec/mg enzyme with cadaverine as substrate</Vmax>
    </kinetics>
</comment>
<comment type="pathway">
    <text evidence="6">Alkaloid biosynthesis; nicotine biosynthesis.</text>
</comment>
<comment type="pathway">
    <text evidence="8">Amine and polyamine degradation; putrescine degradation.</text>
</comment>
<comment type="subunit">
    <text evidence="1">Homodimer.</text>
</comment>
<comment type="subcellular location">
    <subcellularLocation>
        <location evidence="8">Peroxisome</location>
    </subcellularLocation>
</comment>
<comment type="tissue specificity">
    <text evidence="7 8">Mainly expressed in roots, and, to a lower extent, in leaves and stems.</text>
</comment>
<comment type="PTM">
    <text evidence="3">Topaquinone (TPQ) is generated by copper-dependent autoxidation of a specific tyrosyl residue.</text>
</comment>
<comment type="similarity">
    <text evidence="11">Belongs to the copper/topaquinone oxidase family.</text>
</comment>
<dbReference type="EC" id="1.4.3.-" evidence="8 1"/>
<dbReference type="EC" id="1.4.3.21" evidence="3"/>
<dbReference type="RefSeq" id="NP_001412695.1">
    <property type="nucleotide sequence ID" value="NM_001425766.1"/>
</dbReference>
<dbReference type="RefSeq" id="XP_016442617.1">
    <property type="nucleotide sequence ID" value="XM_016587131.1"/>
</dbReference>
<dbReference type="SMR" id="A0A1S3XSG2"/>
<dbReference type="STRING" id="4097.A0A1S3XSG2"/>
<dbReference type="PaxDb" id="4097-A0A1S3XSG2"/>
<dbReference type="GeneID" id="107768026"/>
<dbReference type="KEGG" id="nta:107768026"/>
<dbReference type="OMA" id="EMCNESK"/>
<dbReference type="OrthoDB" id="5379943at2759"/>
<dbReference type="UniPathway" id="UPA00107"/>
<dbReference type="UniPathway" id="UPA00188"/>
<dbReference type="Proteomes" id="UP000084051">
    <property type="component" value="Unplaced"/>
</dbReference>
<dbReference type="GO" id="GO:0005777">
    <property type="term" value="C:peroxisome"/>
    <property type="evidence" value="ECO:0000314"/>
    <property type="project" value="UniProtKB"/>
</dbReference>
<dbReference type="GO" id="GO:0005507">
    <property type="term" value="F:copper ion binding"/>
    <property type="evidence" value="ECO:0000318"/>
    <property type="project" value="GO_Central"/>
</dbReference>
<dbReference type="GO" id="GO:0008131">
    <property type="term" value="F:primary methylamine oxidase activity"/>
    <property type="evidence" value="ECO:0000318"/>
    <property type="project" value="GO_Central"/>
</dbReference>
<dbReference type="GO" id="GO:0050232">
    <property type="term" value="F:putrescine oxidase activity"/>
    <property type="evidence" value="ECO:0000314"/>
    <property type="project" value="UniProtKB"/>
</dbReference>
<dbReference type="GO" id="GO:0048038">
    <property type="term" value="F:quinone binding"/>
    <property type="evidence" value="ECO:0007669"/>
    <property type="project" value="InterPro"/>
</dbReference>
<dbReference type="GO" id="GO:0009820">
    <property type="term" value="P:alkaloid metabolic process"/>
    <property type="evidence" value="ECO:0007669"/>
    <property type="project" value="UniProtKB-KW"/>
</dbReference>
<dbReference type="GO" id="GO:0009308">
    <property type="term" value="P:amine metabolic process"/>
    <property type="evidence" value="ECO:0000318"/>
    <property type="project" value="GO_Central"/>
</dbReference>
<dbReference type="GO" id="GO:0042179">
    <property type="term" value="P:nicotine biosynthetic process"/>
    <property type="evidence" value="ECO:0007669"/>
    <property type="project" value="UniProtKB-UniPathway"/>
</dbReference>
<dbReference type="GO" id="GO:0009447">
    <property type="term" value="P:putrescine catabolic process"/>
    <property type="evidence" value="ECO:0007669"/>
    <property type="project" value="UniProtKB-UniPathway"/>
</dbReference>
<dbReference type="FunFam" id="2.70.98.20:FF:000001">
    <property type="entry name" value="Amine oxidase"/>
    <property type="match status" value="1"/>
</dbReference>
<dbReference type="FunFam" id="3.10.450.40:FF:000002">
    <property type="entry name" value="Amine oxidase"/>
    <property type="match status" value="1"/>
</dbReference>
<dbReference type="FunFam" id="3.10.450.40:FF:000004">
    <property type="entry name" value="Amine oxidase"/>
    <property type="match status" value="1"/>
</dbReference>
<dbReference type="Gene3D" id="3.10.450.40">
    <property type="match status" value="2"/>
</dbReference>
<dbReference type="Gene3D" id="2.70.98.20">
    <property type="entry name" value="Copper amine oxidase, catalytic domain"/>
    <property type="match status" value="1"/>
</dbReference>
<dbReference type="InterPro" id="IPR000269">
    <property type="entry name" value="Cu_amine_oxidase"/>
</dbReference>
<dbReference type="InterPro" id="IPR015798">
    <property type="entry name" value="Cu_amine_oxidase_C"/>
</dbReference>
<dbReference type="InterPro" id="IPR036460">
    <property type="entry name" value="Cu_amine_oxidase_C_sf"/>
</dbReference>
<dbReference type="InterPro" id="IPR016182">
    <property type="entry name" value="Cu_amine_oxidase_N-reg"/>
</dbReference>
<dbReference type="InterPro" id="IPR015800">
    <property type="entry name" value="Cu_amine_oxidase_N2"/>
</dbReference>
<dbReference type="InterPro" id="IPR015802">
    <property type="entry name" value="Cu_amine_oxidase_N3"/>
</dbReference>
<dbReference type="NCBIfam" id="NF008559">
    <property type="entry name" value="PRK11504.1"/>
    <property type="match status" value="1"/>
</dbReference>
<dbReference type="PANTHER" id="PTHR10638">
    <property type="entry name" value="COPPER AMINE OXIDASE"/>
    <property type="match status" value="1"/>
</dbReference>
<dbReference type="PANTHER" id="PTHR10638:SF82">
    <property type="entry name" value="DIAMINE OXIDASE [COPPER-CONTAINING] 1, PEROXISOMAL"/>
    <property type="match status" value="1"/>
</dbReference>
<dbReference type="Pfam" id="PF01179">
    <property type="entry name" value="Cu_amine_oxid"/>
    <property type="match status" value="1"/>
</dbReference>
<dbReference type="Pfam" id="PF02727">
    <property type="entry name" value="Cu_amine_oxidN2"/>
    <property type="match status" value="1"/>
</dbReference>
<dbReference type="Pfam" id="PF02728">
    <property type="entry name" value="Cu_amine_oxidN3"/>
    <property type="match status" value="1"/>
</dbReference>
<dbReference type="SUPFAM" id="SSF49998">
    <property type="entry name" value="Amine oxidase catalytic domain"/>
    <property type="match status" value="1"/>
</dbReference>
<dbReference type="SUPFAM" id="SSF54416">
    <property type="entry name" value="Amine oxidase N-terminal region"/>
    <property type="match status" value="2"/>
</dbReference>
<evidence type="ECO:0000250" key="1">
    <source>
        <dbReference type="UniProtKB" id="A0A1S4BDC4"/>
    </source>
</evidence>
<evidence type="ECO:0000250" key="2">
    <source>
        <dbReference type="UniProtKB" id="P12807"/>
    </source>
</evidence>
<evidence type="ECO:0000250" key="3">
    <source>
        <dbReference type="UniProtKB" id="P46883"/>
    </source>
</evidence>
<evidence type="ECO:0000250" key="4">
    <source>
        <dbReference type="UniProtKB" id="Q43077"/>
    </source>
</evidence>
<evidence type="ECO:0000255" key="5"/>
<evidence type="ECO:0000269" key="6">
    <source>
    </source>
</evidence>
<evidence type="ECO:0000269" key="7">
    <source>
    </source>
</evidence>
<evidence type="ECO:0000269" key="8">
    <source>
    </source>
</evidence>
<evidence type="ECO:0000303" key="9">
    <source>
    </source>
</evidence>
<evidence type="ECO:0000303" key="10">
    <source>
    </source>
</evidence>
<evidence type="ECO:0000305" key="11"/>
<evidence type="ECO:0000312" key="12">
    <source>
        <dbReference type="RefSeq" id="XP_016442617.1"/>
    </source>
</evidence>
<organism>
    <name type="scientific">Nicotiana tabacum</name>
    <name type="common">Common tobacco</name>
    <dbReference type="NCBI Taxonomy" id="4097"/>
    <lineage>
        <taxon>Eukaryota</taxon>
        <taxon>Viridiplantae</taxon>
        <taxon>Streptophyta</taxon>
        <taxon>Embryophyta</taxon>
        <taxon>Tracheophyta</taxon>
        <taxon>Spermatophyta</taxon>
        <taxon>Magnoliopsida</taxon>
        <taxon>eudicotyledons</taxon>
        <taxon>Gunneridae</taxon>
        <taxon>Pentapetalae</taxon>
        <taxon>asterids</taxon>
        <taxon>lamiids</taxon>
        <taxon>Solanales</taxon>
        <taxon>Solanaceae</taxon>
        <taxon>Nicotianoideae</taxon>
        <taxon>Nicotianeae</taxon>
        <taxon>Nicotiana</taxon>
    </lineage>
</organism>
<keyword id="KW-0017">Alkaloid metabolism</keyword>
<keyword id="KW-0186">Copper</keyword>
<keyword id="KW-1015">Disulfide bond</keyword>
<keyword id="KW-0464">Manganese</keyword>
<keyword id="KW-0479">Metal-binding</keyword>
<keyword id="KW-0560">Oxidoreductase</keyword>
<keyword id="KW-0576">Peroxisome</keyword>
<keyword id="KW-1185">Reference proteome</keyword>
<keyword id="KW-0801">TPQ</keyword>
<proteinExistence type="evidence at protein level"/>
<reference key="1">
    <citation type="journal article" date="2014" name="Nat. Commun.">
        <title>The tobacco genome sequence and its comparison with those of tomato and potato.</title>
        <authorList>
            <person name="Sierro N."/>
            <person name="Battey J.N."/>
            <person name="Ouadi S."/>
            <person name="Bakaher N."/>
            <person name="Bovet L."/>
            <person name="Willig A."/>
            <person name="Goepfert S."/>
            <person name="Peitsch M.C."/>
            <person name="Ivanov N.V."/>
        </authorList>
    </citation>
    <scope>NUCLEOTIDE SEQUENCE [LARGE SCALE GENOMIC DNA]</scope>
    <source>
        <strain>cv. TN90</strain>
    </source>
</reference>
<reference key="2">
    <citation type="journal article" date="1968" name="Plant Physiol.">
        <title>Phytochemical Studies on the Tobacco Alkaloids. XII. Identification of gamma-Methylaminobutyraldehyde and its Precursor Role in Nicotine Biosynthesis.</title>
        <authorList>
            <person name="Mizusaki S."/>
            <person name="Kisaki T."/>
            <person name="Tamaki E."/>
        </authorList>
    </citation>
    <scope>FUNCTION</scope>
    <scope>PATHWAY</scope>
</reference>
<reference key="3">
    <citation type="journal article" date="2007" name="Plant Cell Physiol.">
        <title>Molecular cloning of N-methylputrescine oxidase from tobacco.</title>
        <authorList>
            <person name="Katoh A."/>
            <person name="Shoji T."/>
            <person name="Hashimoto T."/>
        </authorList>
    </citation>
    <scope>TISSUE SPECIFICITY</scope>
</reference>
<reference key="4">
    <citation type="journal article" date="2013" name="Phytochemistry">
        <title>Molecular genetics of alkaloid biosynthesis in Nicotiana tabacum.</title>
        <authorList>
            <person name="Dewey R.E."/>
            <person name="Xie J."/>
        </authorList>
    </citation>
    <scope>REVIEW ON ALKALOID BIOSYNTHESIS IN NICOTIANA TABACUM</scope>
</reference>
<reference key="5">
    <citation type="journal article" date="2014" name="Plant Cell Physiol.">
        <title>Molecular evolution of N-methylputrescine oxidase in tobacco.</title>
        <authorList>
            <person name="Naconsie M."/>
            <person name="Kato K."/>
            <person name="Shoji T."/>
            <person name="Hashimoto T."/>
        </authorList>
    </citation>
    <scope>FUNCTION</scope>
    <scope>CATALYTIC ACTIVITY</scope>
    <scope>BIOPHYSICOCHEMICAL PROPERTIES</scope>
    <scope>SUBCELLULAR LOCATION</scope>
    <scope>PATHWAY</scope>
    <scope>TISSUE SPECIFICITY</scope>
</reference>
<reference key="6">
    <citation type="journal article" date="2015" name="Mol. Genet. Genomics">
        <title>Current status and prospects for the study of Nicotiana genomics, genetics, and nicotine biosynthesis genes.</title>
        <authorList>
            <person name="Wang X."/>
            <person name="Bennetzen J.L."/>
        </authorList>
    </citation>
    <scope>REVIEW ON NICOTINE BIOSYNTHESIS</scope>
</reference>